<organism>
    <name type="scientific">Vibrio parahaemolyticus serotype O3:K6 (strain RIMD 2210633)</name>
    <dbReference type="NCBI Taxonomy" id="223926"/>
    <lineage>
        <taxon>Bacteria</taxon>
        <taxon>Pseudomonadati</taxon>
        <taxon>Pseudomonadota</taxon>
        <taxon>Gammaproteobacteria</taxon>
        <taxon>Vibrionales</taxon>
        <taxon>Vibrionaceae</taxon>
        <taxon>Vibrio</taxon>
    </lineage>
</organism>
<dbReference type="EMBL" id="BA000031">
    <property type="protein sequence ID" value="BAC58544.1"/>
    <property type="molecule type" value="Genomic_DNA"/>
</dbReference>
<dbReference type="RefSeq" id="NP_796660.1">
    <property type="nucleotide sequence ID" value="NC_004603.1"/>
</dbReference>
<dbReference type="RefSeq" id="WP_005383146.1">
    <property type="nucleotide sequence ID" value="NC_004603.1"/>
</dbReference>
<dbReference type="SMR" id="Q87SZ1"/>
<dbReference type="GeneID" id="83583099"/>
<dbReference type="KEGG" id="vpa:VP0281"/>
<dbReference type="PATRIC" id="fig|223926.6.peg.272"/>
<dbReference type="eggNOG" id="COG0522">
    <property type="taxonomic scope" value="Bacteria"/>
</dbReference>
<dbReference type="HOGENOM" id="CLU_092403_0_2_6"/>
<dbReference type="PRO" id="PR:Q87SZ1"/>
<dbReference type="Proteomes" id="UP000002493">
    <property type="component" value="Chromosome 1"/>
</dbReference>
<dbReference type="GO" id="GO:0015935">
    <property type="term" value="C:small ribosomal subunit"/>
    <property type="evidence" value="ECO:0007669"/>
    <property type="project" value="InterPro"/>
</dbReference>
<dbReference type="GO" id="GO:0019843">
    <property type="term" value="F:rRNA binding"/>
    <property type="evidence" value="ECO:0007669"/>
    <property type="project" value="UniProtKB-UniRule"/>
</dbReference>
<dbReference type="GO" id="GO:0003735">
    <property type="term" value="F:structural constituent of ribosome"/>
    <property type="evidence" value="ECO:0007669"/>
    <property type="project" value="InterPro"/>
</dbReference>
<dbReference type="GO" id="GO:0042274">
    <property type="term" value="P:ribosomal small subunit biogenesis"/>
    <property type="evidence" value="ECO:0007669"/>
    <property type="project" value="TreeGrafter"/>
</dbReference>
<dbReference type="GO" id="GO:0006412">
    <property type="term" value="P:translation"/>
    <property type="evidence" value="ECO:0007669"/>
    <property type="project" value="UniProtKB-UniRule"/>
</dbReference>
<dbReference type="CDD" id="cd00165">
    <property type="entry name" value="S4"/>
    <property type="match status" value="1"/>
</dbReference>
<dbReference type="FunFam" id="1.10.1050.10:FF:000001">
    <property type="entry name" value="30S ribosomal protein S4"/>
    <property type="match status" value="1"/>
</dbReference>
<dbReference type="FunFam" id="3.10.290.10:FF:000001">
    <property type="entry name" value="30S ribosomal protein S4"/>
    <property type="match status" value="1"/>
</dbReference>
<dbReference type="Gene3D" id="1.10.1050.10">
    <property type="entry name" value="Ribosomal Protein S4 Delta 41, Chain A, domain 1"/>
    <property type="match status" value="1"/>
</dbReference>
<dbReference type="Gene3D" id="3.10.290.10">
    <property type="entry name" value="RNA-binding S4 domain"/>
    <property type="match status" value="1"/>
</dbReference>
<dbReference type="HAMAP" id="MF_01306_B">
    <property type="entry name" value="Ribosomal_uS4_B"/>
    <property type="match status" value="1"/>
</dbReference>
<dbReference type="InterPro" id="IPR022801">
    <property type="entry name" value="Ribosomal_uS4"/>
</dbReference>
<dbReference type="InterPro" id="IPR005709">
    <property type="entry name" value="Ribosomal_uS4_bac-type"/>
</dbReference>
<dbReference type="InterPro" id="IPR018079">
    <property type="entry name" value="Ribosomal_uS4_CS"/>
</dbReference>
<dbReference type="InterPro" id="IPR001912">
    <property type="entry name" value="Ribosomal_uS4_N"/>
</dbReference>
<dbReference type="InterPro" id="IPR002942">
    <property type="entry name" value="S4_RNA-bd"/>
</dbReference>
<dbReference type="InterPro" id="IPR036986">
    <property type="entry name" value="S4_RNA-bd_sf"/>
</dbReference>
<dbReference type="NCBIfam" id="NF003717">
    <property type="entry name" value="PRK05327.1"/>
    <property type="match status" value="1"/>
</dbReference>
<dbReference type="NCBIfam" id="TIGR01017">
    <property type="entry name" value="rpsD_bact"/>
    <property type="match status" value="1"/>
</dbReference>
<dbReference type="PANTHER" id="PTHR11831">
    <property type="entry name" value="30S 40S RIBOSOMAL PROTEIN"/>
    <property type="match status" value="1"/>
</dbReference>
<dbReference type="PANTHER" id="PTHR11831:SF4">
    <property type="entry name" value="SMALL RIBOSOMAL SUBUNIT PROTEIN US4M"/>
    <property type="match status" value="1"/>
</dbReference>
<dbReference type="Pfam" id="PF00163">
    <property type="entry name" value="Ribosomal_S4"/>
    <property type="match status" value="1"/>
</dbReference>
<dbReference type="Pfam" id="PF01479">
    <property type="entry name" value="S4"/>
    <property type="match status" value="1"/>
</dbReference>
<dbReference type="SMART" id="SM01390">
    <property type="entry name" value="Ribosomal_S4"/>
    <property type="match status" value="1"/>
</dbReference>
<dbReference type="SMART" id="SM00363">
    <property type="entry name" value="S4"/>
    <property type="match status" value="1"/>
</dbReference>
<dbReference type="SUPFAM" id="SSF55174">
    <property type="entry name" value="Alpha-L RNA-binding motif"/>
    <property type="match status" value="1"/>
</dbReference>
<dbReference type="PROSITE" id="PS00632">
    <property type="entry name" value="RIBOSOMAL_S4"/>
    <property type="match status" value="1"/>
</dbReference>
<dbReference type="PROSITE" id="PS50889">
    <property type="entry name" value="S4"/>
    <property type="match status" value="1"/>
</dbReference>
<reference key="1">
    <citation type="journal article" date="2003" name="Lancet">
        <title>Genome sequence of Vibrio parahaemolyticus: a pathogenic mechanism distinct from that of V. cholerae.</title>
        <authorList>
            <person name="Makino K."/>
            <person name="Oshima K."/>
            <person name="Kurokawa K."/>
            <person name="Yokoyama K."/>
            <person name="Uda T."/>
            <person name="Tagomori K."/>
            <person name="Iijima Y."/>
            <person name="Najima M."/>
            <person name="Nakano M."/>
            <person name="Yamashita A."/>
            <person name="Kubota Y."/>
            <person name="Kimura S."/>
            <person name="Yasunaga T."/>
            <person name="Honda T."/>
            <person name="Shinagawa H."/>
            <person name="Hattori M."/>
            <person name="Iida T."/>
        </authorList>
    </citation>
    <scope>NUCLEOTIDE SEQUENCE [LARGE SCALE GENOMIC DNA]</scope>
    <source>
        <strain>RIMD 2210633</strain>
    </source>
</reference>
<keyword id="KW-0687">Ribonucleoprotein</keyword>
<keyword id="KW-0689">Ribosomal protein</keyword>
<keyword id="KW-0694">RNA-binding</keyword>
<keyword id="KW-0699">rRNA-binding</keyword>
<proteinExistence type="inferred from homology"/>
<sequence>MARYLGPKLKLSRREGTDLFLKSGVRAIDTKCKIDNAPGVHGARRGRLSEYGVQLREKQKVRRMYGVLEKQFRNYYKEAARLKGNTGENLLQLLEGRLDNVVYRMGFGATRAEARQLVSHKAILVNGKVVNVPSFKVAANDVVSIREKAKQQARIKAALEVAEQREKPTWIEVDGGKMEGTFKRMPERSDLSADINEQLIVELYSK</sequence>
<feature type="chain" id="PRO_0000132491" description="Small ribosomal subunit protein uS4">
    <location>
        <begin position="1"/>
        <end position="206"/>
    </location>
</feature>
<feature type="domain" description="S4 RNA-binding" evidence="1">
    <location>
        <begin position="96"/>
        <end position="156"/>
    </location>
</feature>
<name>RS4_VIBPA</name>
<protein>
    <recommendedName>
        <fullName evidence="1">Small ribosomal subunit protein uS4</fullName>
    </recommendedName>
    <alternativeName>
        <fullName evidence="2">30S ribosomal protein S4</fullName>
    </alternativeName>
</protein>
<evidence type="ECO:0000255" key="1">
    <source>
        <dbReference type="HAMAP-Rule" id="MF_01306"/>
    </source>
</evidence>
<evidence type="ECO:0000305" key="2"/>
<accession>Q87SZ1</accession>
<comment type="function">
    <text evidence="1">One of the primary rRNA binding proteins, it binds directly to 16S rRNA where it nucleates assembly of the body of the 30S subunit.</text>
</comment>
<comment type="function">
    <text evidence="1">With S5 and S12 plays an important role in translational accuracy.</text>
</comment>
<comment type="subunit">
    <text evidence="1">Part of the 30S ribosomal subunit. Contacts protein S5. The interaction surface between S4 and S5 is involved in control of translational fidelity.</text>
</comment>
<comment type="similarity">
    <text evidence="1">Belongs to the universal ribosomal protein uS4 family.</text>
</comment>
<gene>
    <name evidence="1" type="primary">rpsD</name>
    <name type="ordered locus">VP0281</name>
</gene>